<feature type="chain" id="PRO_1000019895" description="Probable cytosol aminopeptidase">
    <location>
        <begin position="1"/>
        <end position="503"/>
    </location>
</feature>
<feature type="active site" evidence="1">
    <location>
        <position position="286"/>
    </location>
</feature>
<feature type="active site" evidence="1">
    <location>
        <position position="360"/>
    </location>
</feature>
<feature type="binding site" evidence="1">
    <location>
        <position position="274"/>
    </location>
    <ligand>
        <name>Mn(2+)</name>
        <dbReference type="ChEBI" id="CHEBI:29035"/>
        <label>2</label>
    </ligand>
</feature>
<feature type="binding site" evidence="1">
    <location>
        <position position="279"/>
    </location>
    <ligand>
        <name>Mn(2+)</name>
        <dbReference type="ChEBI" id="CHEBI:29035"/>
        <label>1</label>
    </ligand>
</feature>
<feature type="binding site" evidence="1">
    <location>
        <position position="279"/>
    </location>
    <ligand>
        <name>Mn(2+)</name>
        <dbReference type="ChEBI" id="CHEBI:29035"/>
        <label>2</label>
    </ligand>
</feature>
<feature type="binding site" evidence="1">
    <location>
        <position position="297"/>
    </location>
    <ligand>
        <name>Mn(2+)</name>
        <dbReference type="ChEBI" id="CHEBI:29035"/>
        <label>2</label>
    </ligand>
</feature>
<feature type="binding site" evidence="1">
    <location>
        <position position="356"/>
    </location>
    <ligand>
        <name>Mn(2+)</name>
        <dbReference type="ChEBI" id="CHEBI:29035"/>
        <label>1</label>
    </ligand>
</feature>
<feature type="binding site" evidence="1">
    <location>
        <position position="358"/>
    </location>
    <ligand>
        <name>Mn(2+)</name>
        <dbReference type="ChEBI" id="CHEBI:29035"/>
        <label>1</label>
    </ligand>
</feature>
<feature type="binding site" evidence="1">
    <location>
        <position position="358"/>
    </location>
    <ligand>
        <name>Mn(2+)</name>
        <dbReference type="ChEBI" id="CHEBI:29035"/>
        <label>2</label>
    </ligand>
</feature>
<dbReference type="EC" id="3.4.11.1" evidence="1"/>
<dbReference type="EC" id="3.4.11.10" evidence="1"/>
<dbReference type="EMBL" id="CP000526">
    <property type="protein sequence ID" value="ABM49916.1"/>
    <property type="molecule type" value="Genomic_DNA"/>
</dbReference>
<dbReference type="RefSeq" id="WP_004191270.1">
    <property type="nucleotide sequence ID" value="NC_008785.1"/>
</dbReference>
<dbReference type="SMR" id="A1V5Z5"/>
<dbReference type="MEROPS" id="M17.003"/>
<dbReference type="KEGG" id="bmv:BMASAVP1_A2339"/>
<dbReference type="HOGENOM" id="CLU_013734_2_2_4"/>
<dbReference type="GO" id="GO:0005737">
    <property type="term" value="C:cytoplasm"/>
    <property type="evidence" value="ECO:0007669"/>
    <property type="project" value="UniProtKB-SubCell"/>
</dbReference>
<dbReference type="GO" id="GO:0030145">
    <property type="term" value="F:manganese ion binding"/>
    <property type="evidence" value="ECO:0007669"/>
    <property type="project" value="UniProtKB-UniRule"/>
</dbReference>
<dbReference type="GO" id="GO:0070006">
    <property type="term" value="F:metalloaminopeptidase activity"/>
    <property type="evidence" value="ECO:0007669"/>
    <property type="project" value="InterPro"/>
</dbReference>
<dbReference type="GO" id="GO:0006508">
    <property type="term" value="P:proteolysis"/>
    <property type="evidence" value="ECO:0007669"/>
    <property type="project" value="UniProtKB-KW"/>
</dbReference>
<dbReference type="CDD" id="cd00433">
    <property type="entry name" value="Peptidase_M17"/>
    <property type="match status" value="1"/>
</dbReference>
<dbReference type="FunFam" id="3.40.630.10:FF:000004">
    <property type="entry name" value="Probable cytosol aminopeptidase"/>
    <property type="match status" value="1"/>
</dbReference>
<dbReference type="Gene3D" id="3.40.220.10">
    <property type="entry name" value="Leucine Aminopeptidase, subunit E, domain 1"/>
    <property type="match status" value="1"/>
</dbReference>
<dbReference type="Gene3D" id="3.40.630.10">
    <property type="entry name" value="Zn peptidases"/>
    <property type="match status" value="1"/>
</dbReference>
<dbReference type="HAMAP" id="MF_00181">
    <property type="entry name" value="Cytosol_peptidase_M17"/>
    <property type="match status" value="1"/>
</dbReference>
<dbReference type="InterPro" id="IPR011356">
    <property type="entry name" value="Leucine_aapep/pepB"/>
</dbReference>
<dbReference type="InterPro" id="IPR043472">
    <property type="entry name" value="Macro_dom-like"/>
</dbReference>
<dbReference type="InterPro" id="IPR000819">
    <property type="entry name" value="Peptidase_M17_C"/>
</dbReference>
<dbReference type="InterPro" id="IPR023042">
    <property type="entry name" value="Peptidase_M17_leu_NH2_pept"/>
</dbReference>
<dbReference type="InterPro" id="IPR008283">
    <property type="entry name" value="Peptidase_M17_N"/>
</dbReference>
<dbReference type="NCBIfam" id="NF002073">
    <property type="entry name" value="PRK00913.1-2"/>
    <property type="match status" value="1"/>
</dbReference>
<dbReference type="NCBIfam" id="NF002074">
    <property type="entry name" value="PRK00913.1-4"/>
    <property type="match status" value="1"/>
</dbReference>
<dbReference type="NCBIfam" id="NF002077">
    <property type="entry name" value="PRK00913.2-4"/>
    <property type="match status" value="1"/>
</dbReference>
<dbReference type="NCBIfam" id="NF002083">
    <property type="entry name" value="PRK00913.3-5"/>
    <property type="match status" value="1"/>
</dbReference>
<dbReference type="PANTHER" id="PTHR11963:SF23">
    <property type="entry name" value="CYTOSOL AMINOPEPTIDASE"/>
    <property type="match status" value="1"/>
</dbReference>
<dbReference type="PANTHER" id="PTHR11963">
    <property type="entry name" value="LEUCINE AMINOPEPTIDASE-RELATED"/>
    <property type="match status" value="1"/>
</dbReference>
<dbReference type="Pfam" id="PF00883">
    <property type="entry name" value="Peptidase_M17"/>
    <property type="match status" value="1"/>
</dbReference>
<dbReference type="Pfam" id="PF02789">
    <property type="entry name" value="Peptidase_M17_N"/>
    <property type="match status" value="1"/>
</dbReference>
<dbReference type="PRINTS" id="PR00481">
    <property type="entry name" value="LAMNOPPTDASE"/>
</dbReference>
<dbReference type="SUPFAM" id="SSF52949">
    <property type="entry name" value="Macro domain-like"/>
    <property type="match status" value="1"/>
</dbReference>
<dbReference type="SUPFAM" id="SSF53187">
    <property type="entry name" value="Zn-dependent exopeptidases"/>
    <property type="match status" value="1"/>
</dbReference>
<dbReference type="PROSITE" id="PS00631">
    <property type="entry name" value="CYTOSOL_AP"/>
    <property type="match status" value="1"/>
</dbReference>
<protein>
    <recommendedName>
        <fullName evidence="1">Probable cytosol aminopeptidase</fullName>
        <ecNumber evidence="1">3.4.11.1</ecNumber>
    </recommendedName>
    <alternativeName>
        <fullName evidence="1">Leucine aminopeptidase</fullName>
        <shortName evidence="1">LAP</shortName>
        <ecNumber evidence="1">3.4.11.10</ecNumber>
    </alternativeName>
    <alternativeName>
        <fullName evidence="1">Leucyl aminopeptidase</fullName>
    </alternativeName>
</protein>
<name>AMPA_BURMS</name>
<evidence type="ECO:0000255" key="1">
    <source>
        <dbReference type="HAMAP-Rule" id="MF_00181"/>
    </source>
</evidence>
<keyword id="KW-0031">Aminopeptidase</keyword>
<keyword id="KW-0963">Cytoplasm</keyword>
<keyword id="KW-0378">Hydrolase</keyword>
<keyword id="KW-0464">Manganese</keyword>
<keyword id="KW-0479">Metal-binding</keyword>
<keyword id="KW-0645">Protease</keyword>
<reference key="1">
    <citation type="journal article" date="2010" name="Genome Biol. Evol.">
        <title>Continuing evolution of Burkholderia mallei through genome reduction and large-scale rearrangements.</title>
        <authorList>
            <person name="Losada L."/>
            <person name="Ronning C.M."/>
            <person name="DeShazer D."/>
            <person name="Woods D."/>
            <person name="Fedorova N."/>
            <person name="Kim H.S."/>
            <person name="Shabalina S.A."/>
            <person name="Pearson T.R."/>
            <person name="Brinkac L."/>
            <person name="Tan P."/>
            <person name="Nandi T."/>
            <person name="Crabtree J."/>
            <person name="Badger J."/>
            <person name="Beckstrom-Sternberg S."/>
            <person name="Saqib M."/>
            <person name="Schutzer S.E."/>
            <person name="Keim P."/>
            <person name="Nierman W.C."/>
        </authorList>
    </citation>
    <scope>NUCLEOTIDE SEQUENCE [LARGE SCALE GENOMIC DNA]</scope>
    <source>
        <strain>SAVP1</strain>
    </source>
</reference>
<comment type="function">
    <text evidence="1">Presumably involved in the processing and regular turnover of intracellular proteins. Catalyzes the removal of unsubstituted N-terminal amino acids from various peptides.</text>
</comment>
<comment type="catalytic activity">
    <reaction evidence="1">
        <text>Release of an N-terminal amino acid, Xaa-|-Yaa-, in which Xaa is preferably Leu, but may be other amino acids including Pro although not Arg or Lys, and Yaa may be Pro. Amino acid amides and methyl esters are also readily hydrolyzed, but rates on arylamides are exceedingly low.</text>
        <dbReference type="EC" id="3.4.11.1"/>
    </reaction>
</comment>
<comment type="catalytic activity">
    <reaction evidence="1">
        <text>Release of an N-terminal amino acid, preferentially leucine, but not glutamic or aspartic acids.</text>
        <dbReference type="EC" id="3.4.11.10"/>
    </reaction>
</comment>
<comment type="cofactor">
    <cofactor evidence="1">
        <name>Mn(2+)</name>
        <dbReference type="ChEBI" id="CHEBI:29035"/>
    </cofactor>
    <text evidence="1">Binds 2 manganese ions per subunit.</text>
</comment>
<comment type="subcellular location">
    <subcellularLocation>
        <location evidence="1">Cytoplasm</location>
    </subcellularLocation>
</comment>
<comment type="similarity">
    <text evidence="1">Belongs to the peptidase M17 family.</text>
</comment>
<sequence>MDFSIKGCDWSKGTANGFLTGKSDCIVLGVFEAQTLSGAALDIDEATKGLVSRVIKAGDIDGKLGKTLFLHEVSGIGASRVLLVGLGRQDAFSQKAYGDAAKVAWRALLGTKVVQVTFTLAQLPVPERASDWGVRAAILALRNETYKFTQMKSKPDAGAPALKRVVFSVDPADDKAAKVAAKQAVALANGMDLTRDLGNLPGNVCTPTYLANTAKKIAKDWGLKVDVLGLKQIQALKMGSFLSVAKGSVEPPQFIVLQYRGAAAKAAPVVLVGKGITFDSGGISLKPGEGMDEMKYDMCGAGSVLGTMRAVAEMGLKVNVVAIVPTCENMPAGNANKPGDIVTSMKGLTIEVLNTDAEGRLILCDALTYAERFKPAAVIDVATLTGACIIALGHHNTGLFSKDDALAGELLDASREAGDPAWRLPLDDEYQDQLKSNFADLANIGGRPAGSVTAACFLSRFAENYPWAHLDIAGTAWKSGAAKGATGRPVPLLAQFLIDRAGA</sequence>
<accession>A1V5Z5</accession>
<proteinExistence type="inferred from homology"/>
<organism>
    <name type="scientific">Burkholderia mallei (strain SAVP1)</name>
    <dbReference type="NCBI Taxonomy" id="320388"/>
    <lineage>
        <taxon>Bacteria</taxon>
        <taxon>Pseudomonadati</taxon>
        <taxon>Pseudomonadota</taxon>
        <taxon>Betaproteobacteria</taxon>
        <taxon>Burkholderiales</taxon>
        <taxon>Burkholderiaceae</taxon>
        <taxon>Burkholderia</taxon>
        <taxon>pseudomallei group</taxon>
    </lineage>
</organism>
<gene>
    <name evidence="1" type="primary">pepA</name>
    <name type="ordered locus">BMASAVP1_A2339</name>
</gene>